<protein>
    <recommendedName>
        <fullName evidence="1">Threonine--tRNA ligase</fullName>
        <ecNumber evidence="1">6.1.1.3</ecNumber>
    </recommendedName>
    <alternativeName>
        <fullName evidence="1">Threonyl-tRNA synthetase</fullName>
        <shortName evidence="1">ThrRS</shortName>
    </alternativeName>
</protein>
<feature type="chain" id="PRO_1000203917" description="Threonine--tRNA ligase">
    <location>
        <begin position="1"/>
        <end position="635"/>
    </location>
</feature>
<feature type="domain" description="TGS" evidence="2">
    <location>
        <begin position="1"/>
        <end position="61"/>
    </location>
</feature>
<feature type="region of interest" description="Catalytic" evidence="1">
    <location>
        <begin position="242"/>
        <end position="533"/>
    </location>
</feature>
<feature type="binding site" evidence="1">
    <location>
        <position position="333"/>
    </location>
    <ligand>
        <name>Zn(2+)</name>
        <dbReference type="ChEBI" id="CHEBI:29105"/>
    </ligand>
</feature>
<feature type="binding site" evidence="1">
    <location>
        <position position="384"/>
    </location>
    <ligand>
        <name>Zn(2+)</name>
        <dbReference type="ChEBI" id="CHEBI:29105"/>
    </ligand>
</feature>
<feature type="binding site" evidence="1">
    <location>
        <position position="510"/>
    </location>
    <ligand>
        <name>Zn(2+)</name>
        <dbReference type="ChEBI" id="CHEBI:29105"/>
    </ligand>
</feature>
<reference key="1">
    <citation type="journal article" date="2009" name="BMC Genomics">
        <title>Analysis of the Rickettsia africae genome reveals that virulence acquisition in Rickettsia species may be explained by genome reduction.</title>
        <authorList>
            <person name="Fournier P.-E."/>
            <person name="El Karkouri K."/>
            <person name="Leroy Q."/>
            <person name="Robert C."/>
            <person name="Giumelli B."/>
            <person name="Renesto P."/>
            <person name="Socolovschi C."/>
            <person name="Parola P."/>
            <person name="Audic S."/>
            <person name="Raoult D."/>
        </authorList>
    </citation>
    <scope>NUCLEOTIDE SEQUENCE [LARGE SCALE GENOMIC DNA]</scope>
    <source>
        <strain>ESF-5</strain>
    </source>
</reference>
<accession>C3PMR6</accession>
<comment type="function">
    <text evidence="1">Catalyzes the attachment of threonine to tRNA(Thr) in a two-step reaction: L-threonine is first activated by ATP to form Thr-AMP and then transferred to the acceptor end of tRNA(Thr). Also edits incorrectly charged L-seryl-tRNA(Thr).</text>
</comment>
<comment type="catalytic activity">
    <reaction evidence="1">
        <text>tRNA(Thr) + L-threonine + ATP = L-threonyl-tRNA(Thr) + AMP + diphosphate + H(+)</text>
        <dbReference type="Rhea" id="RHEA:24624"/>
        <dbReference type="Rhea" id="RHEA-COMP:9670"/>
        <dbReference type="Rhea" id="RHEA-COMP:9704"/>
        <dbReference type="ChEBI" id="CHEBI:15378"/>
        <dbReference type="ChEBI" id="CHEBI:30616"/>
        <dbReference type="ChEBI" id="CHEBI:33019"/>
        <dbReference type="ChEBI" id="CHEBI:57926"/>
        <dbReference type="ChEBI" id="CHEBI:78442"/>
        <dbReference type="ChEBI" id="CHEBI:78534"/>
        <dbReference type="ChEBI" id="CHEBI:456215"/>
        <dbReference type="EC" id="6.1.1.3"/>
    </reaction>
</comment>
<comment type="cofactor">
    <cofactor evidence="1">
        <name>Zn(2+)</name>
        <dbReference type="ChEBI" id="CHEBI:29105"/>
    </cofactor>
    <text evidence="1">Binds 1 zinc ion per subunit.</text>
</comment>
<comment type="subunit">
    <text evidence="1">Homodimer.</text>
</comment>
<comment type="subcellular location">
    <subcellularLocation>
        <location evidence="1">Cytoplasm</location>
    </subcellularLocation>
</comment>
<comment type="similarity">
    <text evidence="1">Belongs to the class-II aminoacyl-tRNA synthetase family.</text>
</comment>
<keyword id="KW-0030">Aminoacyl-tRNA synthetase</keyword>
<keyword id="KW-0067">ATP-binding</keyword>
<keyword id="KW-0963">Cytoplasm</keyword>
<keyword id="KW-0436">Ligase</keyword>
<keyword id="KW-0479">Metal-binding</keyword>
<keyword id="KW-0547">Nucleotide-binding</keyword>
<keyword id="KW-0648">Protein biosynthesis</keyword>
<keyword id="KW-0694">RNA-binding</keyword>
<keyword id="KW-0820">tRNA-binding</keyword>
<keyword id="KW-0862">Zinc</keyword>
<evidence type="ECO:0000255" key="1">
    <source>
        <dbReference type="HAMAP-Rule" id="MF_00184"/>
    </source>
</evidence>
<evidence type="ECO:0000255" key="2">
    <source>
        <dbReference type="PROSITE-ProRule" id="PRU01228"/>
    </source>
</evidence>
<organism>
    <name type="scientific">Rickettsia africae (strain ESF-5)</name>
    <dbReference type="NCBI Taxonomy" id="347255"/>
    <lineage>
        <taxon>Bacteria</taxon>
        <taxon>Pseudomonadati</taxon>
        <taxon>Pseudomonadota</taxon>
        <taxon>Alphaproteobacteria</taxon>
        <taxon>Rickettsiales</taxon>
        <taxon>Rickettsiaceae</taxon>
        <taxon>Rickettsieae</taxon>
        <taxon>Rickettsia</taxon>
        <taxon>spotted fever group</taxon>
    </lineage>
</organism>
<proteinExistence type="inferred from homology"/>
<name>SYT_RICAE</name>
<dbReference type="EC" id="6.1.1.3" evidence="1"/>
<dbReference type="EMBL" id="CP001612">
    <property type="protein sequence ID" value="ACP53226.1"/>
    <property type="molecule type" value="Genomic_DNA"/>
</dbReference>
<dbReference type="RefSeq" id="WP_012719484.1">
    <property type="nucleotide sequence ID" value="NC_012633.1"/>
</dbReference>
<dbReference type="SMR" id="C3PMR6"/>
<dbReference type="KEGG" id="raf:RAF_ORF0276"/>
<dbReference type="HOGENOM" id="CLU_008554_0_1_5"/>
<dbReference type="Proteomes" id="UP000002305">
    <property type="component" value="Chromosome"/>
</dbReference>
<dbReference type="GO" id="GO:0005737">
    <property type="term" value="C:cytoplasm"/>
    <property type="evidence" value="ECO:0007669"/>
    <property type="project" value="UniProtKB-SubCell"/>
</dbReference>
<dbReference type="GO" id="GO:0005524">
    <property type="term" value="F:ATP binding"/>
    <property type="evidence" value="ECO:0007669"/>
    <property type="project" value="UniProtKB-UniRule"/>
</dbReference>
<dbReference type="GO" id="GO:0046872">
    <property type="term" value="F:metal ion binding"/>
    <property type="evidence" value="ECO:0007669"/>
    <property type="project" value="UniProtKB-KW"/>
</dbReference>
<dbReference type="GO" id="GO:0004829">
    <property type="term" value="F:threonine-tRNA ligase activity"/>
    <property type="evidence" value="ECO:0007669"/>
    <property type="project" value="UniProtKB-UniRule"/>
</dbReference>
<dbReference type="GO" id="GO:0000049">
    <property type="term" value="F:tRNA binding"/>
    <property type="evidence" value="ECO:0007669"/>
    <property type="project" value="UniProtKB-KW"/>
</dbReference>
<dbReference type="GO" id="GO:0006435">
    <property type="term" value="P:threonyl-tRNA aminoacylation"/>
    <property type="evidence" value="ECO:0007669"/>
    <property type="project" value="UniProtKB-UniRule"/>
</dbReference>
<dbReference type="CDD" id="cd01667">
    <property type="entry name" value="TGS_ThrRS"/>
    <property type="match status" value="1"/>
</dbReference>
<dbReference type="CDD" id="cd00860">
    <property type="entry name" value="ThrRS_anticodon"/>
    <property type="match status" value="1"/>
</dbReference>
<dbReference type="CDD" id="cd00771">
    <property type="entry name" value="ThrRS_core"/>
    <property type="match status" value="1"/>
</dbReference>
<dbReference type="FunFam" id="3.10.20.30:FF:000005">
    <property type="entry name" value="Threonine--tRNA ligase"/>
    <property type="match status" value="1"/>
</dbReference>
<dbReference type="FunFam" id="3.30.54.20:FF:000002">
    <property type="entry name" value="Threonine--tRNA ligase"/>
    <property type="match status" value="1"/>
</dbReference>
<dbReference type="FunFam" id="3.30.930.10:FF:000002">
    <property type="entry name" value="Threonine--tRNA ligase"/>
    <property type="match status" value="1"/>
</dbReference>
<dbReference type="FunFam" id="3.40.50.800:FF:000001">
    <property type="entry name" value="Threonine--tRNA ligase"/>
    <property type="match status" value="1"/>
</dbReference>
<dbReference type="FunFam" id="3.30.980.10:FF:000005">
    <property type="entry name" value="Threonyl-tRNA synthetase, mitochondrial"/>
    <property type="match status" value="1"/>
</dbReference>
<dbReference type="Gene3D" id="3.10.20.30">
    <property type="match status" value="1"/>
</dbReference>
<dbReference type="Gene3D" id="3.30.54.20">
    <property type="match status" value="1"/>
</dbReference>
<dbReference type="Gene3D" id="3.40.50.800">
    <property type="entry name" value="Anticodon-binding domain"/>
    <property type="match status" value="1"/>
</dbReference>
<dbReference type="Gene3D" id="3.30.930.10">
    <property type="entry name" value="Bira Bifunctional Protein, Domain 2"/>
    <property type="match status" value="1"/>
</dbReference>
<dbReference type="Gene3D" id="3.30.980.10">
    <property type="entry name" value="Threonyl-trna Synthetase, Chain A, domain 2"/>
    <property type="match status" value="1"/>
</dbReference>
<dbReference type="HAMAP" id="MF_00184">
    <property type="entry name" value="Thr_tRNA_synth"/>
    <property type="match status" value="1"/>
</dbReference>
<dbReference type="InterPro" id="IPR002314">
    <property type="entry name" value="aa-tRNA-synt_IIb"/>
</dbReference>
<dbReference type="InterPro" id="IPR006195">
    <property type="entry name" value="aa-tRNA-synth_II"/>
</dbReference>
<dbReference type="InterPro" id="IPR045864">
    <property type="entry name" value="aa-tRNA-synth_II/BPL/LPL"/>
</dbReference>
<dbReference type="InterPro" id="IPR004154">
    <property type="entry name" value="Anticodon-bd"/>
</dbReference>
<dbReference type="InterPro" id="IPR036621">
    <property type="entry name" value="Anticodon-bd_dom_sf"/>
</dbReference>
<dbReference type="InterPro" id="IPR012675">
    <property type="entry name" value="Beta-grasp_dom_sf"/>
</dbReference>
<dbReference type="InterPro" id="IPR004095">
    <property type="entry name" value="TGS"/>
</dbReference>
<dbReference type="InterPro" id="IPR012676">
    <property type="entry name" value="TGS-like"/>
</dbReference>
<dbReference type="InterPro" id="IPR002320">
    <property type="entry name" value="Thr-tRNA-ligase_IIa"/>
</dbReference>
<dbReference type="InterPro" id="IPR018163">
    <property type="entry name" value="Thr/Ala-tRNA-synth_IIc_edit"/>
</dbReference>
<dbReference type="InterPro" id="IPR047246">
    <property type="entry name" value="ThrRS_anticodon"/>
</dbReference>
<dbReference type="InterPro" id="IPR033728">
    <property type="entry name" value="ThrRS_core"/>
</dbReference>
<dbReference type="InterPro" id="IPR012947">
    <property type="entry name" value="tRNA_SAD"/>
</dbReference>
<dbReference type="NCBIfam" id="TIGR00418">
    <property type="entry name" value="thrS"/>
    <property type="match status" value="1"/>
</dbReference>
<dbReference type="PANTHER" id="PTHR11451:SF44">
    <property type="entry name" value="THREONINE--TRNA LIGASE, CHLOROPLASTIC_MITOCHONDRIAL 2"/>
    <property type="match status" value="1"/>
</dbReference>
<dbReference type="PANTHER" id="PTHR11451">
    <property type="entry name" value="THREONINE-TRNA LIGASE"/>
    <property type="match status" value="1"/>
</dbReference>
<dbReference type="Pfam" id="PF03129">
    <property type="entry name" value="HGTP_anticodon"/>
    <property type="match status" value="1"/>
</dbReference>
<dbReference type="Pfam" id="PF02824">
    <property type="entry name" value="TGS"/>
    <property type="match status" value="1"/>
</dbReference>
<dbReference type="Pfam" id="PF00587">
    <property type="entry name" value="tRNA-synt_2b"/>
    <property type="match status" value="1"/>
</dbReference>
<dbReference type="Pfam" id="PF07973">
    <property type="entry name" value="tRNA_SAD"/>
    <property type="match status" value="1"/>
</dbReference>
<dbReference type="PRINTS" id="PR01047">
    <property type="entry name" value="TRNASYNTHTHR"/>
</dbReference>
<dbReference type="SMART" id="SM00863">
    <property type="entry name" value="tRNA_SAD"/>
    <property type="match status" value="1"/>
</dbReference>
<dbReference type="SUPFAM" id="SSF52954">
    <property type="entry name" value="Class II aaRS ABD-related"/>
    <property type="match status" value="1"/>
</dbReference>
<dbReference type="SUPFAM" id="SSF55681">
    <property type="entry name" value="Class II aaRS and biotin synthetases"/>
    <property type="match status" value="1"/>
</dbReference>
<dbReference type="SUPFAM" id="SSF81271">
    <property type="entry name" value="TGS-like"/>
    <property type="match status" value="1"/>
</dbReference>
<dbReference type="SUPFAM" id="SSF55186">
    <property type="entry name" value="ThrRS/AlaRS common domain"/>
    <property type="match status" value="1"/>
</dbReference>
<dbReference type="PROSITE" id="PS50862">
    <property type="entry name" value="AA_TRNA_LIGASE_II"/>
    <property type="match status" value="1"/>
</dbReference>
<dbReference type="PROSITE" id="PS51880">
    <property type="entry name" value="TGS"/>
    <property type="match status" value="1"/>
</dbReference>
<gene>
    <name evidence="1" type="primary">thrS</name>
    <name type="ordered locus">RAF_ORF0276</name>
</gene>
<sequence>MINISFPDGSIKQFAKNITAYEVANAISMSLAKAAMVAEINGELQDLSIVIDNDCKLRILTAKDPECLEIIRHDAAHLTAEAVKELFPETQVTIGPAIENGYYYDFARDKPFTTDDLAVIEAKMQELSQKNEQVTRELWDRDKAVEFFKSIGEHYKAEIIASIPAGEPITLYRQGNFIDLCRGPHAPSTGVVKHFKLMKVAGAYWRGDSRNEMLQRIYGTAWATKEQLDSYLLMLEEAEKRDHRKLGRELDLFHFQEEAQGMVFWHDKGWSIYNTIEQYIRKKIRKNGYTEVKTPVLVDKSLWEASGHWEKFRDDMFALETDDKTLALKPMNCPCHVQIFKQGIKSYRDLPLRMSEFGLCHRNEASGALHGLMRVRSLVQDDAHIFCAAEQITDETVSFCKLLTEVYKDFGFTDIKVKFSDRPEIRAGSNEVWDKAENALKEAVEQAGFNYTLNPGEGAFYGPKLEFVLTDAIGRQWQCGTLQMDFVLPERLDASYVAASGEKKRPVMLHRAILGSLERFIGILIEEYAGRFPLWLAPVQVAIATITSDLNDYALEVQKALIDNGIRTDFNISPDKINYKIREFSNQKIPMIAVIGKQEQENKQVAIRRLGTTDQEVLSVEQLIAVVKEENEKYL</sequence>